<comment type="function">
    <text evidence="1">Converts GTP to 7,8-dihydro-D-neopterin 2',3'-cyclic phosphate, the first intermediate in the biosynthesis of coenzyme methanopterin.</text>
</comment>
<comment type="catalytic activity">
    <reaction evidence="1">
        <text>GTP + H2O = 7,8-dihydroneopterin 2',3'-cyclic phosphate + formate + diphosphate + H(+)</text>
        <dbReference type="Rhea" id="RHEA:25860"/>
        <dbReference type="ChEBI" id="CHEBI:15377"/>
        <dbReference type="ChEBI" id="CHEBI:15378"/>
        <dbReference type="ChEBI" id="CHEBI:15740"/>
        <dbReference type="ChEBI" id="CHEBI:33019"/>
        <dbReference type="ChEBI" id="CHEBI:37565"/>
        <dbReference type="ChEBI" id="CHEBI:58854"/>
        <dbReference type="EC" id="3.5.4.39"/>
    </reaction>
</comment>
<comment type="cofactor">
    <cofactor evidence="1">
        <name>Fe(2+)</name>
        <dbReference type="ChEBI" id="CHEBI:29033"/>
    </cofactor>
    <text evidence="1">Binds 1 Fe(2+) ion per subunit.</text>
</comment>
<comment type="pathway">
    <text evidence="1">Cofactor biosynthesis; 5,6,7,8-tetrahydromethanopterin biosynthesis.</text>
</comment>
<comment type="subunit">
    <text evidence="1">Homodimer.</text>
</comment>
<comment type="similarity">
    <text evidence="1">Belongs to the GTP cyclohydrolase IV family.</text>
</comment>
<organism>
    <name type="scientific">Methanothermobacter thermautotrophicus (strain ATCC 29096 / DSM 1053 / JCM 10044 / NBRC 100330 / Delta H)</name>
    <name type="common">Methanobacterium thermoautotrophicum</name>
    <dbReference type="NCBI Taxonomy" id="187420"/>
    <lineage>
        <taxon>Archaea</taxon>
        <taxon>Methanobacteriati</taxon>
        <taxon>Methanobacteriota</taxon>
        <taxon>Methanomada group</taxon>
        <taxon>Methanobacteria</taxon>
        <taxon>Methanobacteriales</taxon>
        <taxon>Methanobacteriaceae</taxon>
        <taxon>Methanothermobacter</taxon>
    </lineage>
</organism>
<dbReference type="EC" id="3.5.4.39" evidence="1"/>
<dbReference type="EMBL" id="AE000666">
    <property type="protein sequence ID" value="AAB85685.1"/>
    <property type="molecule type" value="Genomic_DNA"/>
</dbReference>
<dbReference type="PIR" id="E69026">
    <property type="entry name" value="E69026"/>
</dbReference>
<dbReference type="RefSeq" id="WP_010876820.1">
    <property type="nucleotide sequence ID" value="NC_000916.1"/>
</dbReference>
<dbReference type="SMR" id="O27264"/>
<dbReference type="STRING" id="187420.MTH_1196"/>
<dbReference type="PaxDb" id="187420-MTH_1196"/>
<dbReference type="EnsemblBacteria" id="AAB85685">
    <property type="protein sequence ID" value="AAB85685"/>
    <property type="gene ID" value="MTH_1196"/>
</dbReference>
<dbReference type="GeneID" id="1471604"/>
<dbReference type="GeneID" id="77401724"/>
<dbReference type="KEGG" id="mth:MTH_1196"/>
<dbReference type="PATRIC" id="fig|187420.15.peg.1174"/>
<dbReference type="HOGENOM" id="CLU_062816_1_0_2"/>
<dbReference type="InParanoid" id="O27264"/>
<dbReference type="UniPathway" id="UPA00065"/>
<dbReference type="Proteomes" id="UP000005223">
    <property type="component" value="Chromosome"/>
</dbReference>
<dbReference type="GO" id="GO:0003934">
    <property type="term" value="F:GTP cyclohydrolase I activity"/>
    <property type="evidence" value="ECO:0007669"/>
    <property type="project" value="InterPro"/>
</dbReference>
<dbReference type="GO" id="GO:0044682">
    <property type="term" value="F:GTP cyclohydrolase IV activity"/>
    <property type="evidence" value="ECO:0007669"/>
    <property type="project" value="UniProtKB-UniRule"/>
</dbReference>
<dbReference type="GO" id="GO:0005506">
    <property type="term" value="F:iron ion binding"/>
    <property type="evidence" value="ECO:0007669"/>
    <property type="project" value="UniProtKB-UniRule"/>
</dbReference>
<dbReference type="GO" id="GO:2001118">
    <property type="term" value="P:tetrahydromethanopterin biosynthetic process"/>
    <property type="evidence" value="ECO:0007669"/>
    <property type="project" value="UniProtKB-UniRule"/>
</dbReference>
<dbReference type="Gene3D" id="3.10.270.10">
    <property type="entry name" value="Urate Oxidase"/>
    <property type="match status" value="1"/>
</dbReference>
<dbReference type="HAMAP" id="MF_01527_A">
    <property type="entry name" value="GTP_cyclohydrol_A"/>
    <property type="match status" value="1"/>
</dbReference>
<dbReference type="InterPro" id="IPR003801">
    <property type="entry name" value="GTP_cyclohydrolase_FolE2/MptA"/>
</dbReference>
<dbReference type="InterPro" id="IPR022840">
    <property type="entry name" value="GTP_cyclohydrolase_MptA"/>
</dbReference>
<dbReference type="NCBIfam" id="TIGR00294">
    <property type="entry name" value="GTP cyclohydrolase MptA"/>
    <property type="match status" value="1"/>
</dbReference>
<dbReference type="PANTHER" id="PTHR36445">
    <property type="entry name" value="GTP CYCLOHYDROLASE MPTA"/>
    <property type="match status" value="1"/>
</dbReference>
<dbReference type="PANTHER" id="PTHR36445:SF1">
    <property type="entry name" value="GTP CYCLOHYDROLASE MPTA"/>
    <property type="match status" value="1"/>
</dbReference>
<dbReference type="Pfam" id="PF02649">
    <property type="entry name" value="GCHY-1"/>
    <property type="match status" value="1"/>
</dbReference>
<gene>
    <name evidence="1" type="primary">mptA</name>
    <name type="ordered locus">MTH_1196</name>
</gene>
<reference key="1">
    <citation type="journal article" date="1997" name="J. Bacteriol.">
        <title>Complete genome sequence of Methanobacterium thermoautotrophicum deltaH: functional analysis and comparative genomics.</title>
        <authorList>
            <person name="Smith D.R."/>
            <person name="Doucette-Stamm L.A."/>
            <person name="Deloughery C."/>
            <person name="Lee H.-M."/>
            <person name="Dubois J."/>
            <person name="Aldredge T."/>
            <person name="Bashirzadeh R."/>
            <person name="Blakely D."/>
            <person name="Cook R."/>
            <person name="Gilbert K."/>
            <person name="Harrison D."/>
            <person name="Hoang L."/>
            <person name="Keagle P."/>
            <person name="Lumm W."/>
            <person name="Pothier B."/>
            <person name="Qiu D."/>
            <person name="Spadafora R."/>
            <person name="Vicare R."/>
            <person name="Wang Y."/>
            <person name="Wierzbowski J."/>
            <person name="Gibson R."/>
            <person name="Jiwani N."/>
            <person name="Caruso A."/>
            <person name="Bush D."/>
            <person name="Safer H."/>
            <person name="Patwell D."/>
            <person name="Prabhakar S."/>
            <person name="McDougall S."/>
            <person name="Shimer G."/>
            <person name="Goyal A."/>
            <person name="Pietrovski S."/>
            <person name="Church G.M."/>
            <person name="Daniels C.J."/>
            <person name="Mao J.-I."/>
            <person name="Rice P."/>
            <person name="Noelling J."/>
            <person name="Reeve J.N."/>
        </authorList>
    </citation>
    <scope>NUCLEOTIDE SEQUENCE [LARGE SCALE GENOMIC DNA]</scope>
    <source>
        <strain>ATCC 29096 / DSM 1053 / JCM 10044 / NBRC 100330 / Delta H</strain>
    </source>
</reference>
<keyword id="KW-0378">Hydrolase</keyword>
<keyword id="KW-0408">Iron</keyword>
<keyword id="KW-0479">Metal-binding</keyword>
<keyword id="KW-1185">Reference proteome</keyword>
<name>MPTA_METTH</name>
<feature type="chain" id="PRO_0000147747" description="GTP cyclohydrolase MptA">
    <location>
        <begin position="1"/>
        <end position="318"/>
    </location>
</feature>
<feature type="site" description="May be catalytically important" evidence="1">
    <location>
        <position position="162"/>
    </location>
</feature>
<protein>
    <recommendedName>
        <fullName evidence="1">GTP cyclohydrolase MptA</fullName>
        <ecNumber evidence="1">3.5.4.39</ecNumber>
    </recommendedName>
    <alternativeName>
        <fullName evidence="1">GTP cyclohydrolase IV</fullName>
    </alternativeName>
</protein>
<sequence>MGLVCFPDTQDKIPSIPVHLTRVGVTGVKKLLKIEREGRRPIILLPTFDAFVDLPSKQRGIHMSRNPEAISDVLEEVVENNALELESLCAEIVNELLKKHRYARRAEVSMNSDFMFMKRSPVTRRKSQEMTKIMADAIGYRDDDGIVIRKMIGAEVVGMTVCPCAQESVREASRQKLLEFLDDETVERVLDCVSFASHNQSGRGMIMIEVPEDQTIRAEKLIDIIESSMSSPVYELLKRPDENAVVMSAHENPMFVEDCVRNMVHRIVSEYPHLPDDTIVTVRQINEESIHRHNAFAEKVATMGELRYEIEELNGAGS</sequence>
<accession>O27264</accession>
<evidence type="ECO:0000255" key="1">
    <source>
        <dbReference type="HAMAP-Rule" id="MF_01527"/>
    </source>
</evidence>
<proteinExistence type="inferred from homology"/>